<proteinExistence type="inferred from homology"/>
<protein>
    <recommendedName>
        <fullName evidence="1">Ribosomal RNA small subunit methyltransferase H</fullName>
        <ecNumber evidence="1">2.1.1.199</ecNumber>
    </recommendedName>
    <alternativeName>
        <fullName evidence="1">16S rRNA m(4)C1402 methyltransferase</fullName>
    </alternativeName>
    <alternativeName>
        <fullName evidence="1">rRNA (cytosine-N(4)-)-methyltransferase RsmH</fullName>
    </alternativeName>
</protein>
<evidence type="ECO:0000255" key="1">
    <source>
        <dbReference type="HAMAP-Rule" id="MF_01007"/>
    </source>
</evidence>
<dbReference type="EC" id="2.1.1.199" evidence="1"/>
<dbReference type="EMBL" id="CP001033">
    <property type="protein sequence ID" value="ACB89589.1"/>
    <property type="molecule type" value="Genomic_DNA"/>
</dbReference>
<dbReference type="RefSeq" id="WP_000159418.1">
    <property type="nucleotide sequence ID" value="NC_010582.1"/>
</dbReference>
<dbReference type="SMR" id="B2ISQ2"/>
<dbReference type="KEGG" id="spw:SPCG_0337"/>
<dbReference type="HOGENOM" id="CLU_038422_2_0_9"/>
<dbReference type="GO" id="GO:0005737">
    <property type="term" value="C:cytoplasm"/>
    <property type="evidence" value="ECO:0007669"/>
    <property type="project" value="UniProtKB-SubCell"/>
</dbReference>
<dbReference type="GO" id="GO:0071424">
    <property type="term" value="F:rRNA (cytosine-N4-)-methyltransferase activity"/>
    <property type="evidence" value="ECO:0007669"/>
    <property type="project" value="UniProtKB-UniRule"/>
</dbReference>
<dbReference type="GO" id="GO:0070475">
    <property type="term" value="P:rRNA base methylation"/>
    <property type="evidence" value="ECO:0007669"/>
    <property type="project" value="UniProtKB-UniRule"/>
</dbReference>
<dbReference type="FunFam" id="1.10.150.170:FF:000001">
    <property type="entry name" value="Ribosomal RNA small subunit methyltransferase H"/>
    <property type="match status" value="1"/>
</dbReference>
<dbReference type="Gene3D" id="1.10.150.170">
    <property type="entry name" value="Putative methyltransferase TM0872, insert domain"/>
    <property type="match status" value="1"/>
</dbReference>
<dbReference type="Gene3D" id="3.40.50.150">
    <property type="entry name" value="Vaccinia Virus protein VP39"/>
    <property type="match status" value="1"/>
</dbReference>
<dbReference type="HAMAP" id="MF_01007">
    <property type="entry name" value="16SrRNA_methyltr_H"/>
    <property type="match status" value="1"/>
</dbReference>
<dbReference type="InterPro" id="IPR002903">
    <property type="entry name" value="RsmH"/>
</dbReference>
<dbReference type="InterPro" id="IPR023397">
    <property type="entry name" value="SAM-dep_MeTrfase_MraW_recog"/>
</dbReference>
<dbReference type="InterPro" id="IPR029063">
    <property type="entry name" value="SAM-dependent_MTases_sf"/>
</dbReference>
<dbReference type="NCBIfam" id="TIGR00006">
    <property type="entry name" value="16S rRNA (cytosine(1402)-N(4))-methyltransferase RsmH"/>
    <property type="match status" value="1"/>
</dbReference>
<dbReference type="PANTHER" id="PTHR11265:SF0">
    <property type="entry name" value="12S RRNA N4-METHYLCYTIDINE METHYLTRANSFERASE"/>
    <property type="match status" value="1"/>
</dbReference>
<dbReference type="PANTHER" id="PTHR11265">
    <property type="entry name" value="S-ADENOSYL-METHYLTRANSFERASE MRAW"/>
    <property type="match status" value="1"/>
</dbReference>
<dbReference type="Pfam" id="PF01795">
    <property type="entry name" value="Methyltransf_5"/>
    <property type="match status" value="1"/>
</dbReference>
<dbReference type="PIRSF" id="PIRSF004486">
    <property type="entry name" value="MraW"/>
    <property type="match status" value="1"/>
</dbReference>
<dbReference type="SUPFAM" id="SSF81799">
    <property type="entry name" value="Putative methyltransferase TM0872, insert domain"/>
    <property type="match status" value="1"/>
</dbReference>
<dbReference type="SUPFAM" id="SSF53335">
    <property type="entry name" value="S-adenosyl-L-methionine-dependent methyltransferases"/>
    <property type="match status" value="1"/>
</dbReference>
<organism>
    <name type="scientific">Streptococcus pneumoniae (strain CGSP14)</name>
    <dbReference type="NCBI Taxonomy" id="516950"/>
    <lineage>
        <taxon>Bacteria</taxon>
        <taxon>Bacillati</taxon>
        <taxon>Bacillota</taxon>
        <taxon>Bacilli</taxon>
        <taxon>Lactobacillales</taxon>
        <taxon>Streptococcaceae</taxon>
        <taxon>Streptococcus</taxon>
    </lineage>
</organism>
<sequence length="316" mass="36058">MTKEFHHVTVLLHETIDMLDVKPDGIYVDATLGGAGHSEYLLSKLSEKGHLYAFDQDQNAIDNAQKRLAPYIEKGMVTFIKDNFRHLQARLRETGVQEIDGICYDLGVSSPQLDQRERGFSYKKDAPLDMRMNQDASLTAYEVVNNYDYHDLVRIFFKYGEDKFSKQIARKIEQAREVKPIETTTELAEIIKLVKPAKELKKKGHPAKQIFQAIRIEVNDELGAADESIQQAMDMLALDGRISVITFHSLEDRLTKQLFKEASTVEVPKGLPFIPDDLKPKMELVSRKPILPSAEELEANNRSHSAKLRVVRKIHK</sequence>
<reference key="1">
    <citation type="journal article" date="2009" name="BMC Genomics">
        <title>Genome evolution driven by host adaptations results in a more virulent and antimicrobial-resistant Streptococcus pneumoniae serotype 14.</title>
        <authorList>
            <person name="Ding F."/>
            <person name="Tang P."/>
            <person name="Hsu M.-H."/>
            <person name="Cui P."/>
            <person name="Hu S."/>
            <person name="Yu J."/>
            <person name="Chiu C.-H."/>
        </authorList>
    </citation>
    <scope>NUCLEOTIDE SEQUENCE [LARGE SCALE GENOMIC DNA]</scope>
    <source>
        <strain>CGSP14</strain>
    </source>
</reference>
<feature type="chain" id="PRO_0000387151" description="Ribosomal RNA small subunit methyltransferase H">
    <location>
        <begin position="1"/>
        <end position="316"/>
    </location>
</feature>
<feature type="binding site" evidence="1">
    <location>
        <begin position="35"/>
        <end position="37"/>
    </location>
    <ligand>
        <name>S-adenosyl-L-methionine</name>
        <dbReference type="ChEBI" id="CHEBI:59789"/>
    </ligand>
</feature>
<feature type="binding site" evidence="1">
    <location>
        <position position="55"/>
    </location>
    <ligand>
        <name>S-adenosyl-L-methionine</name>
        <dbReference type="ChEBI" id="CHEBI:59789"/>
    </ligand>
</feature>
<feature type="binding site" evidence="1">
    <location>
        <position position="84"/>
    </location>
    <ligand>
        <name>S-adenosyl-L-methionine</name>
        <dbReference type="ChEBI" id="CHEBI:59789"/>
    </ligand>
</feature>
<feature type="binding site" evidence="1">
    <location>
        <position position="105"/>
    </location>
    <ligand>
        <name>S-adenosyl-L-methionine</name>
        <dbReference type="ChEBI" id="CHEBI:59789"/>
    </ligand>
</feature>
<feature type="binding site" evidence="1">
    <location>
        <position position="112"/>
    </location>
    <ligand>
        <name>S-adenosyl-L-methionine</name>
        <dbReference type="ChEBI" id="CHEBI:59789"/>
    </ligand>
</feature>
<accession>B2ISQ2</accession>
<name>RSMH_STRPS</name>
<keyword id="KW-0963">Cytoplasm</keyword>
<keyword id="KW-0489">Methyltransferase</keyword>
<keyword id="KW-0698">rRNA processing</keyword>
<keyword id="KW-0949">S-adenosyl-L-methionine</keyword>
<keyword id="KW-0808">Transferase</keyword>
<comment type="function">
    <text evidence="1">Specifically methylates the N4 position of cytidine in position 1402 (C1402) of 16S rRNA.</text>
</comment>
<comment type="catalytic activity">
    <reaction evidence="1">
        <text>cytidine(1402) in 16S rRNA + S-adenosyl-L-methionine = N(4)-methylcytidine(1402) in 16S rRNA + S-adenosyl-L-homocysteine + H(+)</text>
        <dbReference type="Rhea" id="RHEA:42928"/>
        <dbReference type="Rhea" id="RHEA-COMP:10286"/>
        <dbReference type="Rhea" id="RHEA-COMP:10287"/>
        <dbReference type="ChEBI" id="CHEBI:15378"/>
        <dbReference type="ChEBI" id="CHEBI:57856"/>
        <dbReference type="ChEBI" id="CHEBI:59789"/>
        <dbReference type="ChEBI" id="CHEBI:74506"/>
        <dbReference type="ChEBI" id="CHEBI:82748"/>
        <dbReference type="EC" id="2.1.1.199"/>
    </reaction>
</comment>
<comment type="subcellular location">
    <subcellularLocation>
        <location evidence="1">Cytoplasm</location>
    </subcellularLocation>
</comment>
<comment type="similarity">
    <text evidence="1">Belongs to the methyltransferase superfamily. RsmH family.</text>
</comment>
<gene>
    <name evidence="1" type="primary">rsmH</name>
    <name type="synonym">mraW</name>
    <name type="ordered locus">SPCG_0337</name>
</gene>